<protein>
    <recommendedName>
        <fullName>4-hydroxyphenylpyruvate dioxygenase</fullName>
        <ecNumber evidence="2">1.13.11.27</ecNumber>
    </recommendedName>
    <alternativeName>
        <fullName>4-hydroxyphenylpyruvic acid oxidase</fullName>
        <shortName>4HPPD</shortName>
        <shortName>HPD</shortName>
        <shortName>HPPDase</shortName>
    </alternativeName>
</protein>
<name>HPPD_PIG</name>
<reference key="1">
    <citation type="journal article" date="1992" name="J. Biol. Chem.">
        <title>Primary structure deduced from complementary DNA sequence and expression in cultured cells of mammalian 4-hydroxyphenylpyruvic acid dioxygenase. Evidence that the enzyme is a homodimer of identical subunits homologous to rat liver-specific alloantigen F.</title>
        <authorList>
            <person name="Endo F."/>
            <person name="Awata H."/>
            <person name="Tanoue A."/>
            <person name="Ishiguro M."/>
            <person name="Eda Y."/>
            <person name="Titani K."/>
            <person name="Matsuda I."/>
        </authorList>
    </citation>
    <scope>NUCLEOTIDE SEQUENCE [MRNA]</scope>
    <scope>ACETYLATION AT THR-2</scope>
    <scope>PARTIAL PROTEIN SEQUENCE</scope>
    <scope>SUBUNIT</scope>
    <scope>TISSUE SPECIFICITY</scope>
    <source>
        <tissue>Liver</tissue>
    </source>
</reference>
<organism>
    <name type="scientific">Sus scrofa</name>
    <name type="common">Pig</name>
    <dbReference type="NCBI Taxonomy" id="9823"/>
    <lineage>
        <taxon>Eukaryota</taxon>
        <taxon>Metazoa</taxon>
        <taxon>Chordata</taxon>
        <taxon>Craniata</taxon>
        <taxon>Vertebrata</taxon>
        <taxon>Euteleostomi</taxon>
        <taxon>Mammalia</taxon>
        <taxon>Eutheria</taxon>
        <taxon>Laurasiatheria</taxon>
        <taxon>Artiodactyla</taxon>
        <taxon>Suina</taxon>
        <taxon>Suidae</taxon>
        <taxon>Sus</taxon>
    </lineage>
</organism>
<evidence type="ECO:0000250" key="1">
    <source>
        <dbReference type="UniProtKB" id="P32754"/>
    </source>
</evidence>
<evidence type="ECO:0000250" key="2">
    <source>
        <dbReference type="UniProtKB" id="P32755"/>
    </source>
</evidence>
<evidence type="ECO:0000250" key="3">
    <source>
        <dbReference type="UniProtKB" id="P49429"/>
    </source>
</evidence>
<evidence type="ECO:0000255" key="4">
    <source>
        <dbReference type="PROSITE-ProRule" id="PRU01163"/>
    </source>
</evidence>
<evidence type="ECO:0000269" key="5">
    <source>
    </source>
</evidence>
<evidence type="ECO:0000305" key="6"/>
<accession>Q02110</accession>
<sequence>MTSYSDKGEKPERGRFLHFHSVTFWVGNAKQAASYYCSKIGFEPLAYKGLETGSREVVSHVVKQDKIVFVFSSALNPWNKEMGDHLVKHGDGVKDIAFEVEDCDYIVQKARERGAIIVREEVCCAADVRGHHTPLDRARQVWEGTLVEKMTFCLDSRPQPSQTLLHRLLLSKLPKCGLEIIDHIVGNQPDQEMESASQWYMRNLQFHRFWSVDDTQIHTEYSALRSVVMANYEESIKMPINEPAPGKKKSQIQEYVDYNGGAGVQHIALKTEDIITAIRSLRERGVEFLAVPFTYYKQLQEKLKSAKIRVKESIDVLEELKILVDYDEKGYLLQIFTKPMQDRPTVFLEVIQRNNHQGFGAGNFNSLFKAFEEEQELRGNLTDTDPNGVPFRL</sequence>
<gene>
    <name type="primary">HPD</name>
</gene>
<keyword id="KW-0007">Acetylation</keyword>
<keyword id="KW-0963">Cytoplasm</keyword>
<keyword id="KW-0223">Dioxygenase</keyword>
<keyword id="KW-0903">Direct protein sequencing</keyword>
<keyword id="KW-0256">Endoplasmic reticulum</keyword>
<keyword id="KW-0333">Golgi apparatus</keyword>
<keyword id="KW-0408">Iron</keyword>
<keyword id="KW-0472">Membrane</keyword>
<keyword id="KW-0479">Metal-binding</keyword>
<keyword id="KW-0560">Oxidoreductase</keyword>
<keyword id="KW-0585">Phenylalanine catabolism</keyword>
<keyword id="KW-0597">Phosphoprotein</keyword>
<keyword id="KW-1185">Reference proteome</keyword>
<keyword id="KW-0677">Repeat</keyword>
<keyword id="KW-0828">Tyrosine catabolism</keyword>
<dbReference type="EC" id="1.13.11.27" evidence="2"/>
<dbReference type="EMBL" id="D13390">
    <property type="protein sequence ID" value="BAA02660.1"/>
    <property type="molecule type" value="mRNA"/>
</dbReference>
<dbReference type="PIR" id="S32821">
    <property type="entry name" value="S32821"/>
</dbReference>
<dbReference type="SMR" id="Q02110"/>
<dbReference type="FunCoup" id="Q02110">
    <property type="interactions" value="6"/>
</dbReference>
<dbReference type="STRING" id="9823.ENSSSCP00000043797"/>
<dbReference type="BindingDB" id="Q02110"/>
<dbReference type="ChEMBL" id="CHEMBL3203"/>
<dbReference type="DrugCentral" id="Q02110"/>
<dbReference type="iPTMnet" id="Q02110"/>
<dbReference type="PaxDb" id="9823-ENSSSCP00000010467"/>
<dbReference type="PeptideAtlas" id="Q02110"/>
<dbReference type="eggNOG" id="KOG0638">
    <property type="taxonomic scope" value="Eukaryota"/>
</dbReference>
<dbReference type="InParanoid" id="Q02110"/>
<dbReference type="UniPathway" id="UPA00139">
    <property type="reaction ID" value="UER00362"/>
</dbReference>
<dbReference type="PRO" id="PR:Q02110"/>
<dbReference type="Proteomes" id="UP000008227">
    <property type="component" value="Unplaced"/>
</dbReference>
<dbReference type="Proteomes" id="UP000314985">
    <property type="component" value="Unplaced"/>
</dbReference>
<dbReference type="Proteomes" id="UP000694570">
    <property type="component" value="Unplaced"/>
</dbReference>
<dbReference type="Proteomes" id="UP000694571">
    <property type="component" value="Unplaced"/>
</dbReference>
<dbReference type="Proteomes" id="UP000694720">
    <property type="component" value="Unplaced"/>
</dbReference>
<dbReference type="Proteomes" id="UP000694722">
    <property type="component" value="Unplaced"/>
</dbReference>
<dbReference type="Proteomes" id="UP000694723">
    <property type="component" value="Unplaced"/>
</dbReference>
<dbReference type="Proteomes" id="UP000694724">
    <property type="component" value="Unplaced"/>
</dbReference>
<dbReference type="Proteomes" id="UP000694725">
    <property type="component" value="Unplaced"/>
</dbReference>
<dbReference type="Proteomes" id="UP000694726">
    <property type="component" value="Unplaced"/>
</dbReference>
<dbReference type="Proteomes" id="UP000694727">
    <property type="component" value="Unplaced"/>
</dbReference>
<dbReference type="Proteomes" id="UP000694728">
    <property type="component" value="Unplaced"/>
</dbReference>
<dbReference type="GO" id="GO:0005789">
    <property type="term" value="C:endoplasmic reticulum membrane"/>
    <property type="evidence" value="ECO:0000318"/>
    <property type="project" value="GO_Central"/>
</dbReference>
<dbReference type="GO" id="GO:0000139">
    <property type="term" value="C:Golgi membrane"/>
    <property type="evidence" value="ECO:0000318"/>
    <property type="project" value="GO_Central"/>
</dbReference>
<dbReference type="GO" id="GO:0003868">
    <property type="term" value="F:4-hydroxyphenylpyruvate dioxygenase activity"/>
    <property type="evidence" value="ECO:0000250"/>
    <property type="project" value="UniProtKB"/>
</dbReference>
<dbReference type="GO" id="GO:0046872">
    <property type="term" value="F:metal ion binding"/>
    <property type="evidence" value="ECO:0007669"/>
    <property type="project" value="UniProtKB-KW"/>
</dbReference>
<dbReference type="GO" id="GO:0042803">
    <property type="term" value="F:protein homodimerization activity"/>
    <property type="evidence" value="ECO:0000314"/>
    <property type="project" value="UniProtKB"/>
</dbReference>
<dbReference type="GO" id="GO:0006559">
    <property type="term" value="P:L-phenylalanine catabolic process"/>
    <property type="evidence" value="ECO:0007669"/>
    <property type="project" value="UniProtKB-UniPathway"/>
</dbReference>
<dbReference type="GO" id="GO:0006572">
    <property type="term" value="P:tyrosine catabolic process"/>
    <property type="evidence" value="ECO:0000250"/>
    <property type="project" value="UniProtKB"/>
</dbReference>
<dbReference type="CDD" id="cd07250">
    <property type="entry name" value="HPPD_C_like"/>
    <property type="match status" value="1"/>
</dbReference>
<dbReference type="CDD" id="cd08342">
    <property type="entry name" value="HPPD_N_like"/>
    <property type="match status" value="1"/>
</dbReference>
<dbReference type="FunFam" id="3.10.180.10:FF:000022">
    <property type="entry name" value="4-hydroxyphenylpyruvate dioxygenase"/>
    <property type="match status" value="1"/>
</dbReference>
<dbReference type="Gene3D" id="3.10.180.10">
    <property type="entry name" value="2,3-Dihydroxybiphenyl 1,2-Dioxygenase, domain 1"/>
    <property type="match status" value="2"/>
</dbReference>
<dbReference type="InterPro" id="IPR005956">
    <property type="entry name" value="4OHPhenylPyrv_dOase"/>
</dbReference>
<dbReference type="InterPro" id="IPR041735">
    <property type="entry name" value="4OHPhenylPyrv_dOase_C"/>
</dbReference>
<dbReference type="InterPro" id="IPR041736">
    <property type="entry name" value="4OHPhenylPyrv_dOase_N"/>
</dbReference>
<dbReference type="InterPro" id="IPR029068">
    <property type="entry name" value="Glyas_Bleomycin-R_OHBP_Dase"/>
</dbReference>
<dbReference type="InterPro" id="IPR004360">
    <property type="entry name" value="Glyas_Fos-R_dOase_dom"/>
</dbReference>
<dbReference type="InterPro" id="IPR037523">
    <property type="entry name" value="VOC"/>
</dbReference>
<dbReference type="NCBIfam" id="TIGR01263">
    <property type="entry name" value="4HPPD"/>
    <property type="match status" value="1"/>
</dbReference>
<dbReference type="PANTHER" id="PTHR11959">
    <property type="entry name" value="4-HYDROXYPHENYLPYRUVATE DIOXYGENASE"/>
    <property type="match status" value="1"/>
</dbReference>
<dbReference type="PANTHER" id="PTHR11959:SF12">
    <property type="entry name" value="4-HYDROXYPHENYLPYRUVATE DIOXYGENASE"/>
    <property type="match status" value="1"/>
</dbReference>
<dbReference type="Pfam" id="PF00903">
    <property type="entry name" value="Glyoxalase"/>
    <property type="match status" value="2"/>
</dbReference>
<dbReference type="PIRSF" id="PIRSF009283">
    <property type="entry name" value="HPP_dOase"/>
    <property type="match status" value="1"/>
</dbReference>
<dbReference type="SUPFAM" id="SSF54593">
    <property type="entry name" value="Glyoxalase/Bleomycin resistance protein/Dihydroxybiphenyl dioxygenase"/>
    <property type="match status" value="1"/>
</dbReference>
<dbReference type="PROSITE" id="PS51819">
    <property type="entry name" value="VOC"/>
    <property type="match status" value="2"/>
</dbReference>
<feature type="initiator methionine" description="Removed" evidence="5">
    <location>
        <position position="1"/>
    </location>
</feature>
<feature type="chain" id="PRO_0000088390" description="4-hydroxyphenylpyruvate dioxygenase">
    <location>
        <begin position="2"/>
        <end position="393"/>
    </location>
</feature>
<feature type="domain" description="VOC 1" evidence="4">
    <location>
        <begin position="18"/>
        <end position="152"/>
    </location>
</feature>
<feature type="domain" description="VOC 2" evidence="4">
    <location>
        <begin position="180"/>
        <end position="338"/>
    </location>
</feature>
<feature type="binding site" evidence="2">
    <location>
        <position position="183"/>
    </location>
    <ligand>
        <name>Fe cation</name>
        <dbReference type="ChEBI" id="CHEBI:24875"/>
    </ligand>
</feature>
<feature type="binding site" evidence="2">
    <location>
        <position position="266"/>
    </location>
    <ligand>
        <name>Fe cation</name>
        <dbReference type="ChEBI" id="CHEBI:24875"/>
    </ligand>
</feature>
<feature type="binding site" evidence="2">
    <location>
        <position position="349"/>
    </location>
    <ligand>
        <name>Fe cation</name>
        <dbReference type="ChEBI" id="CHEBI:24875"/>
    </ligand>
</feature>
<feature type="modified residue" description="N-acetylthreonine" evidence="5">
    <location>
        <position position="2"/>
    </location>
</feature>
<feature type="modified residue" description="Phosphoserine" evidence="1">
    <location>
        <position position="211"/>
    </location>
</feature>
<feature type="modified residue" description="Phosphoserine" evidence="3">
    <location>
        <position position="226"/>
    </location>
</feature>
<feature type="modified residue" description="Phosphoserine" evidence="3">
    <location>
        <position position="250"/>
    </location>
</feature>
<comment type="function">
    <text evidence="2">Catalyzes the conversion of 4-hydroxyphenylpyruvic acid to homogentisic acid, one of the steps in tyrosine catabolism.</text>
</comment>
<comment type="catalytic activity">
    <reaction evidence="2">
        <text>3-(4-hydroxyphenyl)pyruvate + O2 = homogentisate + CO2</text>
        <dbReference type="Rhea" id="RHEA:16189"/>
        <dbReference type="ChEBI" id="CHEBI:15379"/>
        <dbReference type="ChEBI" id="CHEBI:16169"/>
        <dbReference type="ChEBI" id="CHEBI:16526"/>
        <dbReference type="ChEBI" id="CHEBI:36242"/>
        <dbReference type="EC" id="1.13.11.27"/>
    </reaction>
    <physiologicalReaction direction="left-to-right" evidence="2">
        <dbReference type="Rhea" id="RHEA:16190"/>
    </physiologicalReaction>
</comment>
<comment type="cofactor">
    <cofactor evidence="2">
        <name>Fe cation</name>
        <dbReference type="ChEBI" id="CHEBI:24875"/>
    </cofactor>
    <text evidence="2">Binds 1 Fe cation per subunit.</text>
</comment>
<comment type="pathway">
    <text>Amino-acid degradation; L-phenylalanine degradation; acetoacetate and fumarate from L-phenylalanine: step 3/6.</text>
</comment>
<comment type="subunit">
    <text evidence="5">Homodimer.</text>
</comment>
<comment type="subcellular location">
    <subcellularLocation>
        <location evidence="2">Cytoplasm</location>
    </subcellularLocation>
    <subcellularLocation>
        <location evidence="2">Endoplasmic reticulum membrane</location>
        <topology evidence="2">Peripheral membrane protein</topology>
    </subcellularLocation>
    <subcellularLocation>
        <location evidence="2">Golgi apparatus membrane</location>
        <topology evidence="2">Peripheral membrane protein</topology>
    </subcellularLocation>
</comment>
<comment type="tissue specificity">
    <text evidence="5">Liver.</text>
</comment>
<comment type="similarity">
    <text evidence="6">Belongs to the 4HPPD family.</text>
</comment>
<proteinExistence type="evidence at protein level"/>